<reference key="1">
    <citation type="journal article" date="2006" name="J. Bacteriol.">
        <title>Comparative genomic evidence for a close relationship between the dimorphic prosthecate bacteria Hyphomonas neptunium and Caulobacter crescentus.</title>
        <authorList>
            <person name="Badger J.H."/>
            <person name="Hoover T.R."/>
            <person name="Brun Y.V."/>
            <person name="Weiner R.M."/>
            <person name="Laub M.T."/>
            <person name="Alexandre G."/>
            <person name="Mrazek J."/>
            <person name="Ren Q."/>
            <person name="Paulsen I.T."/>
            <person name="Nelson K.E."/>
            <person name="Khouri H.M."/>
            <person name="Radune D."/>
            <person name="Sosa J."/>
            <person name="Dodson R.J."/>
            <person name="Sullivan S.A."/>
            <person name="Rosovitz M.J."/>
            <person name="Madupu R."/>
            <person name="Brinkac L.M."/>
            <person name="Durkin A.S."/>
            <person name="Daugherty S.C."/>
            <person name="Kothari S.P."/>
            <person name="Giglio M.G."/>
            <person name="Zhou L."/>
            <person name="Haft D.H."/>
            <person name="Selengut J.D."/>
            <person name="Davidsen T.M."/>
            <person name="Yang Q."/>
            <person name="Zafar N."/>
            <person name="Ward N.L."/>
        </authorList>
    </citation>
    <scope>NUCLEOTIDE SEQUENCE [LARGE SCALE GENOMIC DNA]</scope>
    <source>
        <strain>ATCC 15444</strain>
    </source>
</reference>
<feature type="chain" id="PRO_0000329682" description="Polyribonucleotide nucleotidyltransferase">
    <location>
        <begin position="1"/>
        <end position="713"/>
    </location>
</feature>
<feature type="domain" description="KH" evidence="1">
    <location>
        <begin position="555"/>
        <end position="614"/>
    </location>
</feature>
<feature type="domain" description="S1 motif" evidence="1">
    <location>
        <begin position="624"/>
        <end position="692"/>
    </location>
</feature>
<feature type="binding site" evidence="1">
    <location>
        <position position="488"/>
    </location>
    <ligand>
        <name>Mg(2+)</name>
        <dbReference type="ChEBI" id="CHEBI:18420"/>
    </ligand>
</feature>
<feature type="binding site" evidence="1">
    <location>
        <position position="494"/>
    </location>
    <ligand>
        <name>Mg(2+)</name>
        <dbReference type="ChEBI" id="CHEBI:18420"/>
    </ligand>
</feature>
<proteinExistence type="inferred from homology"/>
<accession>Q0BWM9</accession>
<protein>
    <recommendedName>
        <fullName evidence="1">Polyribonucleotide nucleotidyltransferase</fullName>
        <ecNumber evidence="1">2.7.7.8</ecNumber>
    </recommendedName>
    <alternativeName>
        <fullName evidence="1">Polynucleotide phosphorylase</fullName>
        <shortName evidence="1">PNPase</shortName>
    </alternativeName>
</protein>
<comment type="function">
    <text evidence="1">Involved in mRNA degradation. Catalyzes the phosphorolysis of single-stranded polyribonucleotides processively in the 3'- to 5'-direction.</text>
</comment>
<comment type="catalytic activity">
    <reaction evidence="1">
        <text>RNA(n+1) + phosphate = RNA(n) + a ribonucleoside 5'-diphosphate</text>
        <dbReference type="Rhea" id="RHEA:22096"/>
        <dbReference type="Rhea" id="RHEA-COMP:14527"/>
        <dbReference type="Rhea" id="RHEA-COMP:17342"/>
        <dbReference type="ChEBI" id="CHEBI:43474"/>
        <dbReference type="ChEBI" id="CHEBI:57930"/>
        <dbReference type="ChEBI" id="CHEBI:140395"/>
        <dbReference type="EC" id="2.7.7.8"/>
    </reaction>
</comment>
<comment type="cofactor">
    <cofactor evidence="1">
        <name>Mg(2+)</name>
        <dbReference type="ChEBI" id="CHEBI:18420"/>
    </cofactor>
</comment>
<comment type="subcellular location">
    <subcellularLocation>
        <location evidence="1">Cytoplasm</location>
    </subcellularLocation>
</comment>
<comment type="similarity">
    <text evidence="1">Belongs to the polyribonucleotide nucleotidyltransferase family.</text>
</comment>
<keyword id="KW-0963">Cytoplasm</keyword>
<keyword id="KW-0460">Magnesium</keyword>
<keyword id="KW-0479">Metal-binding</keyword>
<keyword id="KW-0548">Nucleotidyltransferase</keyword>
<keyword id="KW-1185">Reference proteome</keyword>
<keyword id="KW-0694">RNA-binding</keyword>
<keyword id="KW-0808">Transferase</keyword>
<name>PNP_HYPNA</name>
<gene>
    <name evidence="1" type="primary">pnp</name>
    <name type="ordered locus">HNE_3441</name>
</gene>
<sequence>MFNKQSVSLEWAGRTLTIETGQVARQADGAVMVQYGDTIVLATAVFAKEAKPGQDFFPLTVNYQEKYFASGRIPGGFFKREGRPTEKETLTSRLIDRPIRPLFVDGFKHEVQVVVTTLSYDLENDADIIALVGASAALVLSGAPFMGPIGAARVGYKDGQYIINPTIAELEESELDLVVAGTTDAVMMVESQAAELSEDVMLGAVVAGHDAMQPVIDAIIALAEKAAKEPFAYEPPDHSAALKSVIDTVGADLSKAYKITAKGERYAAIGAAKDKAKAALLGTDEAPGVMTPEVFKTVFKEAEASVVRGDILKTGQRIDGRKLDQIRPIVAEAGFLPRTHGSSLFTRGETQAICVATLGTSDDEQYIDGLDGTKKEKFMLHYNFPPYSVGETGRMGGAGRREIGHGKLAWRALKAVLPKHEDFPYTIRMVSEITESNGSSSMATVCGCSLAMMDAGVPLTRPVSGIAMGLILEGSEFAVLSDILGDEDHLGDMDFKVAGTENGVTSLQMDIKVAGITKDIMGKALEQAKGGRMHILGEMGKALTASRGQLSENAPQMEIIKVPTDKIRDVIGSGGKVIRGIVDETGAKVNIDDDGTVQISAMDRKSIDAAIKMIKGITAEAEVGEIYEGKVVSMKDFGIFVNFFGPKDGLVHVSQMANKRIGHPKEMVKEGDKVWVKLMGFDERGKVRLSMKVVDQETGKELAEEAGDDASED</sequence>
<dbReference type="EC" id="2.7.7.8" evidence="1"/>
<dbReference type="EMBL" id="CP000158">
    <property type="protein sequence ID" value="ABI76481.1"/>
    <property type="molecule type" value="Genomic_DNA"/>
</dbReference>
<dbReference type="RefSeq" id="WP_011648409.1">
    <property type="nucleotide sequence ID" value="NC_008358.1"/>
</dbReference>
<dbReference type="SMR" id="Q0BWM9"/>
<dbReference type="STRING" id="228405.HNE_3441"/>
<dbReference type="KEGG" id="hne:HNE_3441"/>
<dbReference type="eggNOG" id="COG1185">
    <property type="taxonomic scope" value="Bacteria"/>
</dbReference>
<dbReference type="HOGENOM" id="CLU_004217_2_2_5"/>
<dbReference type="Proteomes" id="UP000001959">
    <property type="component" value="Chromosome"/>
</dbReference>
<dbReference type="GO" id="GO:0005829">
    <property type="term" value="C:cytosol"/>
    <property type="evidence" value="ECO:0007669"/>
    <property type="project" value="TreeGrafter"/>
</dbReference>
<dbReference type="GO" id="GO:0000175">
    <property type="term" value="F:3'-5'-RNA exonuclease activity"/>
    <property type="evidence" value="ECO:0007669"/>
    <property type="project" value="TreeGrafter"/>
</dbReference>
<dbReference type="GO" id="GO:0000287">
    <property type="term" value="F:magnesium ion binding"/>
    <property type="evidence" value="ECO:0007669"/>
    <property type="project" value="UniProtKB-UniRule"/>
</dbReference>
<dbReference type="GO" id="GO:0004654">
    <property type="term" value="F:polyribonucleotide nucleotidyltransferase activity"/>
    <property type="evidence" value="ECO:0007669"/>
    <property type="project" value="UniProtKB-UniRule"/>
</dbReference>
<dbReference type="GO" id="GO:0003723">
    <property type="term" value="F:RNA binding"/>
    <property type="evidence" value="ECO:0007669"/>
    <property type="project" value="UniProtKB-UniRule"/>
</dbReference>
<dbReference type="GO" id="GO:0006402">
    <property type="term" value="P:mRNA catabolic process"/>
    <property type="evidence" value="ECO:0007669"/>
    <property type="project" value="UniProtKB-UniRule"/>
</dbReference>
<dbReference type="GO" id="GO:0006396">
    <property type="term" value="P:RNA processing"/>
    <property type="evidence" value="ECO:0007669"/>
    <property type="project" value="InterPro"/>
</dbReference>
<dbReference type="CDD" id="cd02393">
    <property type="entry name" value="KH-I_PNPase"/>
    <property type="match status" value="1"/>
</dbReference>
<dbReference type="CDD" id="cd11363">
    <property type="entry name" value="RNase_PH_PNPase_1"/>
    <property type="match status" value="1"/>
</dbReference>
<dbReference type="CDD" id="cd11364">
    <property type="entry name" value="RNase_PH_PNPase_2"/>
    <property type="match status" value="1"/>
</dbReference>
<dbReference type="CDD" id="cd04472">
    <property type="entry name" value="S1_PNPase"/>
    <property type="match status" value="1"/>
</dbReference>
<dbReference type="FunFam" id="2.40.50.140:FF:000107">
    <property type="entry name" value="Polyribonucleotide nucleotidyltransferase"/>
    <property type="match status" value="1"/>
</dbReference>
<dbReference type="FunFam" id="3.30.1370.10:FF:000001">
    <property type="entry name" value="Polyribonucleotide nucleotidyltransferase"/>
    <property type="match status" value="1"/>
</dbReference>
<dbReference type="FunFam" id="3.30.230.70:FF:000001">
    <property type="entry name" value="Polyribonucleotide nucleotidyltransferase"/>
    <property type="match status" value="1"/>
</dbReference>
<dbReference type="FunFam" id="3.30.230.70:FF:000002">
    <property type="entry name" value="Polyribonucleotide nucleotidyltransferase"/>
    <property type="match status" value="1"/>
</dbReference>
<dbReference type="Gene3D" id="3.30.230.70">
    <property type="entry name" value="GHMP Kinase, N-terminal domain"/>
    <property type="match status" value="2"/>
</dbReference>
<dbReference type="Gene3D" id="3.30.1370.10">
    <property type="entry name" value="K Homology domain, type 1"/>
    <property type="match status" value="1"/>
</dbReference>
<dbReference type="Gene3D" id="2.40.50.140">
    <property type="entry name" value="Nucleic acid-binding proteins"/>
    <property type="match status" value="1"/>
</dbReference>
<dbReference type="HAMAP" id="MF_01595">
    <property type="entry name" value="PNPase"/>
    <property type="match status" value="1"/>
</dbReference>
<dbReference type="InterPro" id="IPR001247">
    <property type="entry name" value="ExoRNase_PH_dom1"/>
</dbReference>
<dbReference type="InterPro" id="IPR015847">
    <property type="entry name" value="ExoRNase_PH_dom2"/>
</dbReference>
<dbReference type="InterPro" id="IPR036345">
    <property type="entry name" value="ExoRNase_PH_dom2_sf"/>
</dbReference>
<dbReference type="InterPro" id="IPR004087">
    <property type="entry name" value="KH_dom"/>
</dbReference>
<dbReference type="InterPro" id="IPR004088">
    <property type="entry name" value="KH_dom_type_1"/>
</dbReference>
<dbReference type="InterPro" id="IPR036612">
    <property type="entry name" value="KH_dom_type_1_sf"/>
</dbReference>
<dbReference type="InterPro" id="IPR012340">
    <property type="entry name" value="NA-bd_OB-fold"/>
</dbReference>
<dbReference type="InterPro" id="IPR012162">
    <property type="entry name" value="PNPase"/>
</dbReference>
<dbReference type="InterPro" id="IPR027408">
    <property type="entry name" value="PNPase/RNase_PH_dom_sf"/>
</dbReference>
<dbReference type="InterPro" id="IPR015848">
    <property type="entry name" value="PNPase_PH_RNA-bd_bac/org-type"/>
</dbReference>
<dbReference type="InterPro" id="IPR020568">
    <property type="entry name" value="Ribosomal_Su5_D2-typ_SF"/>
</dbReference>
<dbReference type="InterPro" id="IPR003029">
    <property type="entry name" value="S1_domain"/>
</dbReference>
<dbReference type="NCBIfam" id="TIGR03591">
    <property type="entry name" value="polynuc_phos"/>
    <property type="match status" value="1"/>
</dbReference>
<dbReference type="NCBIfam" id="NF008805">
    <property type="entry name" value="PRK11824.1"/>
    <property type="match status" value="1"/>
</dbReference>
<dbReference type="PANTHER" id="PTHR11252">
    <property type="entry name" value="POLYRIBONUCLEOTIDE NUCLEOTIDYLTRANSFERASE"/>
    <property type="match status" value="1"/>
</dbReference>
<dbReference type="PANTHER" id="PTHR11252:SF0">
    <property type="entry name" value="POLYRIBONUCLEOTIDE NUCLEOTIDYLTRANSFERASE 1, MITOCHONDRIAL"/>
    <property type="match status" value="1"/>
</dbReference>
<dbReference type="Pfam" id="PF00013">
    <property type="entry name" value="KH_1"/>
    <property type="match status" value="1"/>
</dbReference>
<dbReference type="Pfam" id="PF03726">
    <property type="entry name" value="PNPase"/>
    <property type="match status" value="1"/>
</dbReference>
<dbReference type="Pfam" id="PF01138">
    <property type="entry name" value="RNase_PH"/>
    <property type="match status" value="2"/>
</dbReference>
<dbReference type="Pfam" id="PF03725">
    <property type="entry name" value="RNase_PH_C"/>
    <property type="match status" value="2"/>
</dbReference>
<dbReference type="Pfam" id="PF00575">
    <property type="entry name" value="S1"/>
    <property type="match status" value="1"/>
</dbReference>
<dbReference type="PIRSF" id="PIRSF005499">
    <property type="entry name" value="PNPase"/>
    <property type="match status" value="1"/>
</dbReference>
<dbReference type="SMART" id="SM00322">
    <property type="entry name" value="KH"/>
    <property type="match status" value="1"/>
</dbReference>
<dbReference type="SMART" id="SM00316">
    <property type="entry name" value="S1"/>
    <property type="match status" value="1"/>
</dbReference>
<dbReference type="SUPFAM" id="SSF54791">
    <property type="entry name" value="Eukaryotic type KH-domain (KH-domain type I)"/>
    <property type="match status" value="1"/>
</dbReference>
<dbReference type="SUPFAM" id="SSF50249">
    <property type="entry name" value="Nucleic acid-binding proteins"/>
    <property type="match status" value="1"/>
</dbReference>
<dbReference type="SUPFAM" id="SSF55666">
    <property type="entry name" value="Ribonuclease PH domain 2-like"/>
    <property type="match status" value="2"/>
</dbReference>
<dbReference type="SUPFAM" id="SSF54211">
    <property type="entry name" value="Ribosomal protein S5 domain 2-like"/>
    <property type="match status" value="2"/>
</dbReference>
<dbReference type="PROSITE" id="PS50084">
    <property type="entry name" value="KH_TYPE_1"/>
    <property type="match status" value="1"/>
</dbReference>
<dbReference type="PROSITE" id="PS50126">
    <property type="entry name" value="S1"/>
    <property type="match status" value="1"/>
</dbReference>
<evidence type="ECO:0000255" key="1">
    <source>
        <dbReference type="HAMAP-Rule" id="MF_01595"/>
    </source>
</evidence>
<organism>
    <name type="scientific">Hyphomonas neptunium (strain ATCC 15444)</name>
    <dbReference type="NCBI Taxonomy" id="228405"/>
    <lineage>
        <taxon>Bacteria</taxon>
        <taxon>Pseudomonadati</taxon>
        <taxon>Pseudomonadota</taxon>
        <taxon>Alphaproteobacteria</taxon>
        <taxon>Hyphomonadales</taxon>
        <taxon>Hyphomonadaceae</taxon>
        <taxon>Hyphomonas</taxon>
    </lineage>
</organism>